<gene>
    <name type="primary">SEP2</name>
    <name type="synonym">AGL4</name>
    <name type="ordered locus">At3g02310</name>
    <name type="ORF">F14P3.4</name>
</gene>
<sequence length="250" mass="28578">MGRGRVELKRIENKINRQVTFAKRRNGLLKKAYELSVLCDAEVSLIVFSNRGKLYEFCSTSNMLKTLERYQKCSYGSIEVNNKPAKELENSYREYLKLKGRYENLQRQQRNLLGEDLGPLNSKELEQLERQLDGSLKQVRCIKTQYMLDQLSDLQGKEHILLDANRALSMKLEDMIGVRHHHIGGGWEGGDQQNIAYGHPQAHSQGLYQSLECDPTLQIGYSHPVCSEQMAVTVQGQSQQGNGYIPGWML</sequence>
<organism>
    <name type="scientific">Arabidopsis thaliana</name>
    <name type="common">Mouse-ear cress</name>
    <dbReference type="NCBI Taxonomy" id="3702"/>
    <lineage>
        <taxon>Eukaryota</taxon>
        <taxon>Viridiplantae</taxon>
        <taxon>Streptophyta</taxon>
        <taxon>Embryophyta</taxon>
        <taxon>Tracheophyta</taxon>
        <taxon>Spermatophyta</taxon>
        <taxon>Magnoliopsida</taxon>
        <taxon>eudicotyledons</taxon>
        <taxon>Gunneridae</taxon>
        <taxon>Pentapetalae</taxon>
        <taxon>rosids</taxon>
        <taxon>malvids</taxon>
        <taxon>Brassicales</taxon>
        <taxon>Brassicaceae</taxon>
        <taxon>Camelineae</taxon>
        <taxon>Arabidopsis</taxon>
    </lineage>
</organism>
<comment type="function">
    <text>Probable transcription factor. Functions with SEPALLATA1/AGL2 and SEPALLATA3/AGL9 to ensure proper development of petals, stamens and carpels and to prevent the indeterminate growth of the flower meristem. Forms a heterodimer via the K-box domain with AG, that could be involved in genes regulation during floral meristem development.</text>
</comment>
<comment type="subunit">
    <text evidence="4 5">Heterodimer with AGAMOUS capable of binding to CArG-box sequences (PubMed:9418042). Interacts with TT16/AGL32 (PubMed:16080001).</text>
</comment>
<comment type="subcellular location">
    <subcellularLocation>
        <location>Nucleus</location>
    </subcellularLocation>
</comment>
<comment type="developmental stage">
    <text>Expressed early during flower development.</text>
</comment>
<comment type="disruption phenotype">
    <text evidence="5">Triple mutations in the SEP1, SEP2 and SEP3 genes result in the replacement of the stamens and petals by sepals and of the carpels by a new mutant flower with sepaloid organs.</text>
</comment>
<evidence type="ECO:0000255" key="1"/>
<evidence type="ECO:0000255" key="2">
    <source>
        <dbReference type="PROSITE-ProRule" id="PRU00251"/>
    </source>
</evidence>
<evidence type="ECO:0000255" key="3">
    <source>
        <dbReference type="PROSITE-ProRule" id="PRU00629"/>
    </source>
</evidence>
<evidence type="ECO:0000269" key="4">
    <source>
    </source>
</evidence>
<evidence type="ECO:0000269" key="5">
    <source>
    </source>
</evidence>
<protein>
    <recommendedName>
        <fullName>Developmental protein SEPALLATA 2</fullName>
    </recommendedName>
    <alternativeName>
        <fullName>Agamous-like MADS-box protein AGL4</fullName>
    </alternativeName>
</protein>
<feature type="chain" id="PRO_0000199484" description="Developmental protein SEPALLATA 2">
    <location>
        <begin position="1"/>
        <end position="250"/>
    </location>
</feature>
<feature type="domain" description="MADS-box" evidence="2">
    <location>
        <begin position="3"/>
        <end position="57"/>
    </location>
</feature>
<feature type="domain" description="K-box" evidence="3">
    <location>
        <begin position="88"/>
        <end position="178"/>
    </location>
</feature>
<feature type="coiled-coil region" evidence="1">
    <location>
        <begin position="85"/>
        <end position="150"/>
    </location>
</feature>
<proteinExistence type="evidence at protein level"/>
<dbReference type="EMBL" id="M55552">
    <property type="protein sequence ID" value="AAA32734.1"/>
    <property type="molecule type" value="mRNA"/>
</dbReference>
<dbReference type="EMBL" id="AC009755">
    <property type="protein sequence ID" value="AAF02125.1"/>
    <property type="molecule type" value="Genomic_DNA"/>
</dbReference>
<dbReference type="EMBL" id="CP002686">
    <property type="protein sequence ID" value="AEE73791.1"/>
    <property type="molecule type" value="Genomic_DNA"/>
</dbReference>
<dbReference type="PIR" id="D39534">
    <property type="entry name" value="D39534"/>
</dbReference>
<dbReference type="RefSeq" id="NP_186880.1">
    <property type="nucleotide sequence ID" value="NM_111098.4"/>
</dbReference>
<dbReference type="SMR" id="P29384"/>
<dbReference type="BioGRID" id="6484">
    <property type="interactions" value="14"/>
</dbReference>
<dbReference type="DIP" id="DIP-33790N"/>
<dbReference type="FunCoup" id="P29384">
    <property type="interactions" value="38"/>
</dbReference>
<dbReference type="IntAct" id="P29384">
    <property type="interactions" value="15"/>
</dbReference>
<dbReference type="STRING" id="3702.P29384"/>
<dbReference type="iPTMnet" id="P29384"/>
<dbReference type="PaxDb" id="3702-AT3G02310.1"/>
<dbReference type="ProteomicsDB" id="232784"/>
<dbReference type="EnsemblPlants" id="AT3G02310.1">
    <property type="protein sequence ID" value="AT3G02310.1"/>
    <property type="gene ID" value="AT3G02310"/>
</dbReference>
<dbReference type="GeneID" id="821151"/>
<dbReference type="Gramene" id="AT3G02310.1">
    <property type="protein sequence ID" value="AT3G02310.1"/>
    <property type="gene ID" value="AT3G02310"/>
</dbReference>
<dbReference type="KEGG" id="ath:AT3G02310"/>
<dbReference type="Araport" id="AT3G02310"/>
<dbReference type="TAIR" id="AT3G02310">
    <property type="gene designation" value="SEP2"/>
</dbReference>
<dbReference type="eggNOG" id="KOG0014">
    <property type="taxonomic scope" value="Eukaryota"/>
</dbReference>
<dbReference type="HOGENOM" id="CLU_053053_0_2_1"/>
<dbReference type="InParanoid" id="P29384"/>
<dbReference type="PhylomeDB" id="P29384"/>
<dbReference type="PRO" id="PR:P29384"/>
<dbReference type="Proteomes" id="UP000006548">
    <property type="component" value="Chromosome 3"/>
</dbReference>
<dbReference type="ExpressionAtlas" id="P29384">
    <property type="expression patterns" value="baseline and differential"/>
</dbReference>
<dbReference type="GO" id="GO:0005634">
    <property type="term" value="C:nucleus"/>
    <property type="evidence" value="ECO:0007669"/>
    <property type="project" value="UniProtKB-SubCell"/>
</dbReference>
<dbReference type="GO" id="GO:0003700">
    <property type="term" value="F:DNA-binding transcription factor activity"/>
    <property type="evidence" value="ECO:0000250"/>
    <property type="project" value="TAIR"/>
</dbReference>
<dbReference type="GO" id="GO:0046983">
    <property type="term" value="F:protein dimerization activity"/>
    <property type="evidence" value="ECO:0007669"/>
    <property type="project" value="InterPro"/>
</dbReference>
<dbReference type="GO" id="GO:0000977">
    <property type="term" value="F:RNA polymerase II transcription regulatory region sequence-specific DNA binding"/>
    <property type="evidence" value="ECO:0007669"/>
    <property type="project" value="InterPro"/>
</dbReference>
<dbReference type="GO" id="GO:0030154">
    <property type="term" value="P:cell differentiation"/>
    <property type="evidence" value="ECO:0007669"/>
    <property type="project" value="UniProtKB-KW"/>
</dbReference>
<dbReference type="GO" id="GO:0048481">
    <property type="term" value="P:plant ovule development"/>
    <property type="evidence" value="ECO:0000315"/>
    <property type="project" value="TAIR"/>
</dbReference>
<dbReference type="GO" id="GO:0045944">
    <property type="term" value="P:positive regulation of transcription by RNA polymerase II"/>
    <property type="evidence" value="ECO:0007669"/>
    <property type="project" value="InterPro"/>
</dbReference>
<dbReference type="CDD" id="cd00265">
    <property type="entry name" value="MADS_MEF2_like"/>
    <property type="match status" value="1"/>
</dbReference>
<dbReference type="FunFam" id="3.40.1810.10:FF:000004">
    <property type="entry name" value="MADS-box transcription factor 1"/>
    <property type="match status" value="1"/>
</dbReference>
<dbReference type="Gene3D" id="3.40.1810.10">
    <property type="entry name" value="Transcription factor, MADS-box"/>
    <property type="match status" value="1"/>
</dbReference>
<dbReference type="InterPro" id="IPR050142">
    <property type="entry name" value="MADS-box/MEF2_TF"/>
</dbReference>
<dbReference type="InterPro" id="IPR033896">
    <property type="entry name" value="MEF2-like_N"/>
</dbReference>
<dbReference type="InterPro" id="IPR002487">
    <property type="entry name" value="TF_Kbox"/>
</dbReference>
<dbReference type="InterPro" id="IPR002100">
    <property type="entry name" value="TF_MADSbox"/>
</dbReference>
<dbReference type="InterPro" id="IPR036879">
    <property type="entry name" value="TF_MADSbox_sf"/>
</dbReference>
<dbReference type="PANTHER" id="PTHR48019">
    <property type="entry name" value="SERUM RESPONSE FACTOR HOMOLOG"/>
    <property type="match status" value="1"/>
</dbReference>
<dbReference type="Pfam" id="PF01486">
    <property type="entry name" value="K-box"/>
    <property type="match status" value="1"/>
</dbReference>
<dbReference type="Pfam" id="PF00319">
    <property type="entry name" value="SRF-TF"/>
    <property type="match status" value="1"/>
</dbReference>
<dbReference type="PRINTS" id="PR00404">
    <property type="entry name" value="MADSDOMAIN"/>
</dbReference>
<dbReference type="SMART" id="SM00432">
    <property type="entry name" value="MADS"/>
    <property type="match status" value="1"/>
</dbReference>
<dbReference type="SUPFAM" id="SSF55455">
    <property type="entry name" value="SRF-like"/>
    <property type="match status" value="1"/>
</dbReference>
<dbReference type="PROSITE" id="PS51297">
    <property type="entry name" value="K_BOX"/>
    <property type="match status" value="1"/>
</dbReference>
<dbReference type="PROSITE" id="PS00350">
    <property type="entry name" value="MADS_BOX_1"/>
    <property type="match status" value="1"/>
</dbReference>
<dbReference type="PROSITE" id="PS50066">
    <property type="entry name" value="MADS_BOX_2"/>
    <property type="match status" value="1"/>
</dbReference>
<keyword id="KW-0010">Activator</keyword>
<keyword id="KW-0175">Coiled coil</keyword>
<keyword id="KW-0217">Developmental protein</keyword>
<keyword id="KW-0221">Differentiation</keyword>
<keyword id="KW-0238">DNA-binding</keyword>
<keyword id="KW-0287">Flowering</keyword>
<keyword id="KW-0539">Nucleus</keyword>
<keyword id="KW-1185">Reference proteome</keyword>
<keyword id="KW-0804">Transcription</keyword>
<keyword id="KW-0805">Transcription regulation</keyword>
<accession>P29384</accession>
<reference key="1">
    <citation type="journal article" date="1991" name="Genes Dev.">
        <title>AGL1-AGL6, an Arabidopsis gene family with similarity to floral homeotic and transcription factor genes.</title>
        <authorList>
            <person name="Ma H."/>
            <person name="Yanofsky M.F."/>
            <person name="Meyerowitz E.M."/>
        </authorList>
    </citation>
    <scope>NUCLEOTIDE SEQUENCE [MRNA]</scope>
    <source>
        <strain>cv. Landsberg erecta</strain>
    </source>
</reference>
<reference key="2">
    <citation type="journal article" date="2000" name="Nature">
        <title>Sequence and analysis of chromosome 3 of the plant Arabidopsis thaliana.</title>
        <authorList>
            <person name="Salanoubat M."/>
            <person name="Lemcke K."/>
            <person name="Rieger M."/>
            <person name="Ansorge W."/>
            <person name="Unseld M."/>
            <person name="Fartmann B."/>
            <person name="Valle G."/>
            <person name="Bloecker H."/>
            <person name="Perez-Alonso M."/>
            <person name="Obermaier B."/>
            <person name="Delseny M."/>
            <person name="Boutry M."/>
            <person name="Grivell L.A."/>
            <person name="Mache R."/>
            <person name="Puigdomenech P."/>
            <person name="De Simone V."/>
            <person name="Choisne N."/>
            <person name="Artiguenave F."/>
            <person name="Robert C."/>
            <person name="Brottier P."/>
            <person name="Wincker P."/>
            <person name="Cattolico L."/>
            <person name="Weissenbach J."/>
            <person name="Saurin W."/>
            <person name="Quetier F."/>
            <person name="Schaefer M."/>
            <person name="Mueller-Auer S."/>
            <person name="Gabel C."/>
            <person name="Fuchs M."/>
            <person name="Benes V."/>
            <person name="Wurmbach E."/>
            <person name="Drzonek H."/>
            <person name="Erfle H."/>
            <person name="Jordan N."/>
            <person name="Bangert S."/>
            <person name="Wiedelmann R."/>
            <person name="Kranz H."/>
            <person name="Voss H."/>
            <person name="Holland R."/>
            <person name="Brandt P."/>
            <person name="Nyakatura G."/>
            <person name="Vezzi A."/>
            <person name="D'Angelo M."/>
            <person name="Pallavicini A."/>
            <person name="Toppo S."/>
            <person name="Simionati B."/>
            <person name="Conrad A."/>
            <person name="Hornischer K."/>
            <person name="Kauer G."/>
            <person name="Loehnert T.-H."/>
            <person name="Nordsiek G."/>
            <person name="Reichelt J."/>
            <person name="Scharfe M."/>
            <person name="Schoen O."/>
            <person name="Bargues M."/>
            <person name="Terol J."/>
            <person name="Climent J."/>
            <person name="Navarro P."/>
            <person name="Collado C."/>
            <person name="Perez-Perez A."/>
            <person name="Ottenwaelder B."/>
            <person name="Duchemin D."/>
            <person name="Cooke R."/>
            <person name="Laudie M."/>
            <person name="Berger-Llauro C."/>
            <person name="Purnelle B."/>
            <person name="Masuy D."/>
            <person name="de Haan M."/>
            <person name="Maarse A.C."/>
            <person name="Alcaraz J.-P."/>
            <person name="Cottet A."/>
            <person name="Casacuberta E."/>
            <person name="Monfort A."/>
            <person name="Argiriou A."/>
            <person name="Flores M."/>
            <person name="Liguori R."/>
            <person name="Vitale D."/>
            <person name="Mannhaupt G."/>
            <person name="Haase D."/>
            <person name="Schoof H."/>
            <person name="Rudd S."/>
            <person name="Zaccaria P."/>
            <person name="Mewes H.-W."/>
            <person name="Mayer K.F.X."/>
            <person name="Kaul S."/>
            <person name="Town C.D."/>
            <person name="Koo H.L."/>
            <person name="Tallon L.J."/>
            <person name="Jenkins J."/>
            <person name="Rooney T."/>
            <person name="Rizzo M."/>
            <person name="Walts A."/>
            <person name="Utterback T."/>
            <person name="Fujii C.Y."/>
            <person name="Shea T.P."/>
            <person name="Creasy T.H."/>
            <person name="Haas B."/>
            <person name="Maiti R."/>
            <person name="Wu D."/>
            <person name="Peterson J."/>
            <person name="Van Aken S."/>
            <person name="Pai G."/>
            <person name="Militscher J."/>
            <person name="Sellers P."/>
            <person name="Gill J.E."/>
            <person name="Feldblyum T.V."/>
            <person name="Preuss D."/>
            <person name="Lin X."/>
            <person name="Nierman W.C."/>
            <person name="Salzberg S.L."/>
            <person name="White O."/>
            <person name="Venter J.C."/>
            <person name="Fraser C.M."/>
            <person name="Kaneko T."/>
            <person name="Nakamura Y."/>
            <person name="Sato S."/>
            <person name="Kato T."/>
            <person name="Asamizu E."/>
            <person name="Sasamoto S."/>
            <person name="Kimura T."/>
            <person name="Idesawa K."/>
            <person name="Kawashima K."/>
            <person name="Kishida Y."/>
            <person name="Kiyokawa C."/>
            <person name="Kohara M."/>
            <person name="Matsumoto M."/>
            <person name="Matsuno A."/>
            <person name="Muraki A."/>
            <person name="Nakayama S."/>
            <person name="Nakazaki N."/>
            <person name="Shinpo S."/>
            <person name="Takeuchi C."/>
            <person name="Wada T."/>
            <person name="Watanabe A."/>
            <person name="Yamada M."/>
            <person name="Yasuda M."/>
            <person name="Tabata S."/>
        </authorList>
    </citation>
    <scope>NUCLEOTIDE SEQUENCE [LARGE SCALE GENOMIC DNA]</scope>
    <source>
        <strain>cv. Columbia</strain>
    </source>
</reference>
<reference key="3">
    <citation type="journal article" date="2017" name="Plant J.">
        <title>Araport11: a complete reannotation of the Arabidopsis thaliana reference genome.</title>
        <authorList>
            <person name="Cheng C.Y."/>
            <person name="Krishnakumar V."/>
            <person name="Chan A.P."/>
            <person name="Thibaud-Nissen F."/>
            <person name="Schobel S."/>
            <person name="Town C.D."/>
        </authorList>
    </citation>
    <scope>GENOME REANNOTATION</scope>
    <source>
        <strain>cv. Columbia</strain>
    </source>
</reference>
<reference key="4">
    <citation type="journal article" date="1997" name="Plant J.">
        <title>Specific interactions between the K domains of AG and AGLs, members of the MADS domain family of DNA binding proteins.</title>
        <authorList>
            <person name="Fan H.-Y."/>
            <person name="Hu Y."/>
            <person name="Tudor M."/>
            <person name="Ma H."/>
        </authorList>
    </citation>
    <scope>CHARACTERIZATION</scope>
    <scope>SUBUNIT</scope>
    <scope>DISRUPTION PHENOTYPE</scope>
</reference>
<reference key="5">
    <citation type="journal article" date="2000" name="Nature">
        <title>B and C floral organ identity functions require SEPALLATA MADS-box genes.</title>
        <authorList>
            <person name="Pelaz S."/>
            <person name="Ditta G.S."/>
            <person name="Baumann E."/>
            <person name="Wisman E."/>
            <person name="Yanofsky M.F."/>
        </authorList>
    </citation>
    <scope>CHARACTERIZATION</scope>
</reference>
<reference key="6">
    <citation type="journal article" date="2005" name="Mol. Genet. Genomics">
        <title>Mutant analysis, protein-protein interactions and subcellular localization of the Arabidopsis B sister (ABS) protein.</title>
        <authorList>
            <person name="Kaufmann K."/>
            <person name="Anfang N."/>
            <person name="Saedler H."/>
            <person name="Theissen G."/>
        </authorList>
    </citation>
    <scope>INTERACTION WITH TT16/AGL32</scope>
</reference>
<name>SEP2_ARATH</name>